<name>FTSIH_NEPOL</name>
<dbReference type="EC" id="3.4.16.4" evidence="1"/>
<dbReference type="EMBL" id="AF137379">
    <property type="protein sequence ID" value="AAD54780.1"/>
    <property type="molecule type" value="Genomic_DNA"/>
</dbReference>
<dbReference type="RefSeq" id="NP_050809.1">
    <property type="nucleotide sequence ID" value="NC_000927.1"/>
</dbReference>
<dbReference type="SMR" id="Q9TL36"/>
<dbReference type="GeneID" id="802005"/>
<dbReference type="GO" id="GO:0031969">
    <property type="term" value="C:chloroplast membrane"/>
    <property type="evidence" value="ECO:0007669"/>
    <property type="project" value="UniProtKB-SubCell"/>
</dbReference>
<dbReference type="GO" id="GO:0005886">
    <property type="term" value="C:plasma membrane"/>
    <property type="evidence" value="ECO:0007669"/>
    <property type="project" value="TreeGrafter"/>
</dbReference>
<dbReference type="GO" id="GO:0008658">
    <property type="term" value="F:penicillin binding"/>
    <property type="evidence" value="ECO:0007669"/>
    <property type="project" value="InterPro"/>
</dbReference>
<dbReference type="GO" id="GO:0009002">
    <property type="term" value="F:serine-type D-Ala-D-Ala carboxypeptidase activity"/>
    <property type="evidence" value="ECO:0007669"/>
    <property type="project" value="UniProtKB-EC"/>
</dbReference>
<dbReference type="GO" id="GO:0071555">
    <property type="term" value="P:cell wall organization"/>
    <property type="evidence" value="ECO:0007669"/>
    <property type="project" value="TreeGrafter"/>
</dbReference>
<dbReference type="GO" id="GO:0006508">
    <property type="term" value="P:proteolysis"/>
    <property type="evidence" value="ECO:0007669"/>
    <property type="project" value="UniProtKB-KW"/>
</dbReference>
<dbReference type="GO" id="GO:0008360">
    <property type="term" value="P:regulation of cell shape"/>
    <property type="evidence" value="ECO:0007669"/>
    <property type="project" value="UniProtKB-KW"/>
</dbReference>
<dbReference type="Gene3D" id="3.40.710.10">
    <property type="entry name" value="DD-peptidase/beta-lactamase superfamily"/>
    <property type="match status" value="1"/>
</dbReference>
<dbReference type="Gene3D" id="3.90.1310.10">
    <property type="entry name" value="Penicillin-binding protein 2a (Domain 2)"/>
    <property type="match status" value="1"/>
</dbReference>
<dbReference type="InterPro" id="IPR050515">
    <property type="entry name" value="Bact_Transpept/Beta-Lactamase"/>
</dbReference>
<dbReference type="InterPro" id="IPR012338">
    <property type="entry name" value="Beta-lactam/transpept-like"/>
</dbReference>
<dbReference type="InterPro" id="IPR005311">
    <property type="entry name" value="PBP_dimer"/>
</dbReference>
<dbReference type="InterPro" id="IPR036138">
    <property type="entry name" value="PBP_dimer_sf"/>
</dbReference>
<dbReference type="InterPro" id="IPR001460">
    <property type="entry name" value="PCN-bd_Tpept"/>
</dbReference>
<dbReference type="PANTHER" id="PTHR30627">
    <property type="entry name" value="PEPTIDOGLYCAN D,D-TRANSPEPTIDASE"/>
    <property type="match status" value="1"/>
</dbReference>
<dbReference type="PANTHER" id="PTHR30627:SF1">
    <property type="entry name" value="PEPTIDOGLYCAN D,D-TRANSPEPTIDASE FTSI"/>
    <property type="match status" value="1"/>
</dbReference>
<dbReference type="Pfam" id="PF03717">
    <property type="entry name" value="PBP_dimer"/>
    <property type="match status" value="1"/>
</dbReference>
<dbReference type="Pfam" id="PF00905">
    <property type="entry name" value="Transpeptidase"/>
    <property type="match status" value="1"/>
</dbReference>
<dbReference type="SUPFAM" id="SSF56601">
    <property type="entry name" value="beta-lactamase/transpeptidase-like"/>
    <property type="match status" value="1"/>
</dbReference>
<dbReference type="SUPFAM" id="SSF56519">
    <property type="entry name" value="Penicillin binding protein dimerisation domain"/>
    <property type="match status" value="1"/>
</dbReference>
<keyword id="KW-0121">Carboxypeptidase</keyword>
<keyword id="KW-0133">Cell shape</keyword>
<keyword id="KW-0150">Chloroplast</keyword>
<keyword id="KW-0378">Hydrolase</keyword>
<keyword id="KW-0472">Membrane</keyword>
<keyword id="KW-0573">Peptidoglycan synthesis</keyword>
<keyword id="KW-0934">Plastid</keyword>
<keyword id="KW-0645">Protease</keyword>
<keyword id="KW-0812">Transmembrane</keyword>
<keyword id="KW-1133">Transmembrane helix</keyword>
<feature type="chain" id="PRO_0000195462" description="Peptidoglycan D,D-transpeptidase FtsI homolog">
    <location>
        <begin position="1"/>
        <end position="709"/>
    </location>
</feature>
<feature type="transmembrane region" description="Helical" evidence="2">
    <location>
        <begin position="20"/>
        <end position="42"/>
    </location>
</feature>
<feature type="active site" description="Acyl-ester intermediate" evidence="1">
    <location>
        <position position="341"/>
    </location>
</feature>
<organism>
    <name type="scientific">Nephroselmis olivacea</name>
    <name type="common">Green alga</name>
    <dbReference type="NCBI Taxonomy" id="31312"/>
    <lineage>
        <taxon>Eukaryota</taxon>
        <taxon>Viridiplantae</taxon>
        <taxon>Chlorophyta</taxon>
        <taxon>Nephroselmidophyceae</taxon>
        <taxon>Nephroselmidales</taxon>
        <taxon>Nephroselmidaceae</taxon>
        <taxon>Nephroselmis</taxon>
    </lineage>
</organism>
<geneLocation type="chloroplast"/>
<reference key="1">
    <citation type="journal article" date="1999" name="Proc. Natl. Acad. Sci. U.S.A.">
        <title>The complete chloroplast DNA sequence of the green alga Nephroselmis olivacea: insights into the architecture of ancestral chloroplast genomes.</title>
        <authorList>
            <person name="Turmel M."/>
            <person name="Otis C."/>
            <person name="Lemieux C."/>
        </authorList>
    </citation>
    <scope>NUCLEOTIDE SEQUENCE [LARGE SCALE GENOMIC DNA]</scope>
    <source>
        <strain>NIES-484 / S-N-5-8</strain>
    </source>
</reference>
<gene>
    <name type="primary">ftsI</name>
</gene>
<evidence type="ECO:0000250" key="1">
    <source>
        <dbReference type="UniProtKB" id="P0AD68"/>
    </source>
</evidence>
<evidence type="ECO:0000255" key="2"/>
<evidence type="ECO:0000305" key="3"/>
<sequence>MIYNYPMKYRRQFRRLPKHLQGIYYAFLSISTMIKIALDPYSKRPMKWMHSGTPFQYENERMVMIKLSLATVGLLFATRLSGLQFNKYTELKSVAERQQIGQVNDPQQRKIILDHHGDIVAIDLPAYDLYVHPRMCSISLERIAELLSPILDLSSQYLYNRLDEGDSGICLMHQIDTNTSAQIRRLGVDGIELVHHPQRVYPKRGSFESILGYVDTEGYGQAGLESSLDDWMKSTYQDVPCWMDGHGNFLGIRFPKQILFHQESALQLTIDCGLQEKVSQLITNAMNRFGAKRIAAIIMEAHSGAIRCLATSPSYDPNCYGWFPMERFRCWPITDLFEPGSTFKPVNLAIALENGIFQPTDRILDTGKIRIGDSWIGNVGGGFIWDRSLDHLTGTQILQRSSNVGMVRVMQSLDPAIYHRNLIRLGLGSHRNDNQTSFKMSSHDHNESGWNLKDLTSDYAISVVKDQDEFVDHEIEAATASFGQGLAMTPLKLLQLIATIANGGMAVTPHLISKIVTLDHFHHLQSMNEFSLQGWVGQSVLSRSQYHAKQPRPYTHDLYLGHVPVPSLELGWFDVKSIPPHTRERRRLFSRQTCNVLLGMLEQVVLDAQATGSRGFLPGYAMAGKTGTAQKASALGGYSTDSVVTSFVGIYPAVKPKFVTLVIIDEPEDPFRFGFNTAVDVTQTLISEMIVQEQDPPSYPTVSLFERNM</sequence>
<protein>
    <recommendedName>
        <fullName evidence="3">Peptidoglycan D,D-transpeptidase FtsI homolog</fullName>
        <ecNumber evidence="1">3.4.16.4</ecNumber>
    </recommendedName>
</protein>
<comment type="catalytic activity">
    <reaction evidence="1">
        <text>Preferential cleavage: (Ac)2-L-Lys-D-Ala-|-D-Ala. Also transpeptidation of peptidyl-alanyl moieties that are N-acyl substituents of D-alanine.</text>
        <dbReference type="EC" id="3.4.16.4"/>
    </reaction>
</comment>
<comment type="subcellular location">
    <subcellularLocation>
        <location evidence="3">Plastid</location>
        <location evidence="3">Chloroplast membrane</location>
        <topology evidence="3">Single-pass membrane protein</topology>
    </subcellularLocation>
</comment>
<comment type="miscellaneous">
    <text>The presence of this gene in the chloroplast genome suggests there may be an unsuspected vestigal peptidoglycan layer in this organism's chloroplasts.</text>
</comment>
<comment type="similarity">
    <text evidence="3">Belongs to the transpeptidase family.</text>
</comment>
<accession>Q9TL36</accession>
<proteinExistence type="inferred from homology"/>